<gene>
    <name evidence="1" type="primary">pcm</name>
    <name type="ordered locus">Sputcn32_2751</name>
</gene>
<feature type="chain" id="PRO_1000093288" description="Protein-L-isoaspartate O-methyltransferase">
    <location>
        <begin position="1"/>
        <end position="211"/>
    </location>
</feature>
<feature type="active site" evidence="1">
    <location>
        <position position="62"/>
    </location>
</feature>
<organism>
    <name type="scientific">Shewanella putrefaciens (strain CN-32 / ATCC BAA-453)</name>
    <dbReference type="NCBI Taxonomy" id="319224"/>
    <lineage>
        <taxon>Bacteria</taxon>
        <taxon>Pseudomonadati</taxon>
        <taxon>Pseudomonadota</taxon>
        <taxon>Gammaproteobacteria</taxon>
        <taxon>Alteromonadales</taxon>
        <taxon>Shewanellaceae</taxon>
        <taxon>Shewanella</taxon>
    </lineage>
</organism>
<evidence type="ECO:0000255" key="1">
    <source>
        <dbReference type="HAMAP-Rule" id="MF_00090"/>
    </source>
</evidence>
<comment type="function">
    <text evidence="1">Catalyzes the methyl esterification of L-isoaspartyl residues in peptides and proteins that result from spontaneous decomposition of normal L-aspartyl and L-asparaginyl residues. It plays a role in the repair and/or degradation of damaged proteins.</text>
</comment>
<comment type="catalytic activity">
    <reaction evidence="1">
        <text>[protein]-L-isoaspartate + S-adenosyl-L-methionine = [protein]-L-isoaspartate alpha-methyl ester + S-adenosyl-L-homocysteine</text>
        <dbReference type="Rhea" id="RHEA:12705"/>
        <dbReference type="Rhea" id="RHEA-COMP:12143"/>
        <dbReference type="Rhea" id="RHEA-COMP:12144"/>
        <dbReference type="ChEBI" id="CHEBI:57856"/>
        <dbReference type="ChEBI" id="CHEBI:59789"/>
        <dbReference type="ChEBI" id="CHEBI:90596"/>
        <dbReference type="ChEBI" id="CHEBI:90598"/>
        <dbReference type="EC" id="2.1.1.77"/>
    </reaction>
</comment>
<comment type="subcellular location">
    <subcellularLocation>
        <location evidence="1">Cytoplasm</location>
    </subcellularLocation>
</comment>
<comment type="similarity">
    <text evidence="1">Belongs to the methyltransferase superfamily. L-isoaspartyl/D-aspartyl protein methyltransferase family.</text>
</comment>
<reference key="1">
    <citation type="submission" date="2007-04" db="EMBL/GenBank/DDBJ databases">
        <title>Complete sequence of Shewanella putrefaciens CN-32.</title>
        <authorList>
            <consortium name="US DOE Joint Genome Institute"/>
            <person name="Copeland A."/>
            <person name="Lucas S."/>
            <person name="Lapidus A."/>
            <person name="Barry K."/>
            <person name="Detter J.C."/>
            <person name="Glavina del Rio T."/>
            <person name="Hammon N."/>
            <person name="Israni S."/>
            <person name="Dalin E."/>
            <person name="Tice H."/>
            <person name="Pitluck S."/>
            <person name="Chain P."/>
            <person name="Malfatti S."/>
            <person name="Shin M."/>
            <person name="Vergez L."/>
            <person name="Schmutz J."/>
            <person name="Larimer F."/>
            <person name="Land M."/>
            <person name="Hauser L."/>
            <person name="Kyrpides N."/>
            <person name="Mikhailova N."/>
            <person name="Romine M.F."/>
            <person name="Fredrickson J."/>
            <person name="Tiedje J."/>
            <person name="Richardson P."/>
        </authorList>
    </citation>
    <scope>NUCLEOTIDE SEQUENCE [LARGE SCALE GENOMIC DNA]</scope>
    <source>
        <strain>CN-32 / ATCC BAA-453</strain>
    </source>
</reference>
<proteinExistence type="inferred from homology"/>
<dbReference type="EC" id="2.1.1.77" evidence="1"/>
<dbReference type="EMBL" id="CP000681">
    <property type="protein sequence ID" value="ABP76470.1"/>
    <property type="molecule type" value="Genomic_DNA"/>
</dbReference>
<dbReference type="SMR" id="A4Y937"/>
<dbReference type="STRING" id="319224.Sputcn32_2751"/>
<dbReference type="KEGG" id="spc:Sputcn32_2751"/>
<dbReference type="eggNOG" id="COG2518">
    <property type="taxonomic scope" value="Bacteria"/>
</dbReference>
<dbReference type="HOGENOM" id="CLU_055432_2_0_6"/>
<dbReference type="GO" id="GO:0005737">
    <property type="term" value="C:cytoplasm"/>
    <property type="evidence" value="ECO:0007669"/>
    <property type="project" value="UniProtKB-SubCell"/>
</dbReference>
<dbReference type="GO" id="GO:0004719">
    <property type="term" value="F:protein-L-isoaspartate (D-aspartate) O-methyltransferase activity"/>
    <property type="evidence" value="ECO:0007669"/>
    <property type="project" value="UniProtKB-UniRule"/>
</dbReference>
<dbReference type="GO" id="GO:0032259">
    <property type="term" value="P:methylation"/>
    <property type="evidence" value="ECO:0007669"/>
    <property type="project" value="UniProtKB-KW"/>
</dbReference>
<dbReference type="GO" id="GO:0036211">
    <property type="term" value="P:protein modification process"/>
    <property type="evidence" value="ECO:0007669"/>
    <property type="project" value="UniProtKB-UniRule"/>
</dbReference>
<dbReference type="GO" id="GO:0030091">
    <property type="term" value="P:protein repair"/>
    <property type="evidence" value="ECO:0007669"/>
    <property type="project" value="UniProtKB-UniRule"/>
</dbReference>
<dbReference type="CDD" id="cd02440">
    <property type="entry name" value="AdoMet_MTases"/>
    <property type="match status" value="1"/>
</dbReference>
<dbReference type="FunFam" id="3.40.50.150:FF:000010">
    <property type="entry name" value="Protein-L-isoaspartate O-methyltransferase"/>
    <property type="match status" value="1"/>
</dbReference>
<dbReference type="Gene3D" id="3.40.50.150">
    <property type="entry name" value="Vaccinia Virus protein VP39"/>
    <property type="match status" value="1"/>
</dbReference>
<dbReference type="HAMAP" id="MF_00090">
    <property type="entry name" value="PIMT"/>
    <property type="match status" value="1"/>
</dbReference>
<dbReference type="InterPro" id="IPR000682">
    <property type="entry name" value="PCMT"/>
</dbReference>
<dbReference type="InterPro" id="IPR029063">
    <property type="entry name" value="SAM-dependent_MTases_sf"/>
</dbReference>
<dbReference type="NCBIfam" id="TIGR00080">
    <property type="entry name" value="pimt"/>
    <property type="match status" value="1"/>
</dbReference>
<dbReference type="NCBIfam" id="NF001453">
    <property type="entry name" value="PRK00312.1"/>
    <property type="match status" value="1"/>
</dbReference>
<dbReference type="PANTHER" id="PTHR11579">
    <property type="entry name" value="PROTEIN-L-ISOASPARTATE O-METHYLTRANSFERASE"/>
    <property type="match status" value="1"/>
</dbReference>
<dbReference type="PANTHER" id="PTHR11579:SF0">
    <property type="entry name" value="PROTEIN-L-ISOASPARTATE(D-ASPARTATE) O-METHYLTRANSFERASE"/>
    <property type="match status" value="1"/>
</dbReference>
<dbReference type="Pfam" id="PF01135">
    <property type="entry name" value="PCMT"/>
    <property type="match status" value="1"/>
</dbReference>
<dbReference type="SUPFAM" id="SSF53335">
    <property type="entry name" value="S-adenosyl-L-methionine-dependent methyltransferases"/>
    <property type="match status" value="1"/>
</dbReference>
<dbReference type="PROSITE" id="PS01279">
    <property type="entry name" value="PCMT"/>
    <property type="match status" value="1"/>
</dbReference>
<protein>
    <recommendedName>
        <fullName evidence="1">Protein-L-isoaspartate O-methyltransferase</fullName>
        <ecNumber evidence="1">2.1.1.77</ecNumber>
    </recommendedName>
    <alternativeName>
        <fullName evidence="1">L-isoaspartyl protein carboxyl methyltransferase</fullName>
    </alternativeName>
    <alternativeName>
        <fullName evidence="1">Protein L-isoaspartyl methyltransferase</fullName>
    </alternativeName>
    <alternativeName>
        <fullName evidence="1">Protein-beta-aspartate methyltransferase</fullName>
        <shortName evidence="1">PIMT</shortName>
    </alternativeName>
</protein>
<keyword id="KW-0963">Cytoplasm</keyword>
<keyword id="KW-0489">Methyltransferase</keyword>
<keyword id="KW-0949">S-adenosyl-L-methionine</keyword>
<keyword id="KW-0808">Transferase</keyword>
<accession>A4Y937</accession>
<sequence length="211" mass="23149">MTRVALTSAVNLAKKLSDAGIRNQAVLKAISQTPREMFLDNALAHKAYENTALPIGQGQTISQPYIVARMTELLLSNMPKKVLEVGTGSGYQAAILAQLVPELCTIERIKGLQIQARQRLKRLDLHNVSFKYGDGWQGWSNRSPFDAIMVTAAAATVPEALLSQLVDGGVLVLPVGENTQQLMRITRHRERFSSENIETVKFVPLVNGELA</sequence>
<name>PIMT_SHEPC</name>